<accession>P20922</accession>
<reference key="1">
    <citation type="journal article" date="1987" name="Eur. J. Biochem.">
        <title>Nucleotide sequence and comparative analysis of the frd operon encoding the fumarate reductase of Proteus vulgaris. Extensive sequence divergence of the membrane anchors and absence of an frd-linked ampC cephalosporinase gene.</title>
        <authorList>
            <person name="Cole S.T."/>
        </authorList>
    </citation>
    <scope>NUCLEOTIDE SEQUENCE [GENOMIC DNA]</scope>
</reference>
<organism>
    <name type="scientific">Proteus vulgaris</name>
    <dbReference type="NCBI Taxonomy" id="585"/>
    <lineage>
        <taxon>Bacteria</taxon>
        <taxon>Pseudomonadati</taxon>
        <taxon>Pseudomonadota</taxon>
        <taxon>Gammaproteobacteria</taxon>
        <taxon>Enterobacterales</taxon>
        <taxon>Morganellaceae</taxon>
        <taxon>Proteus</taxon>
    </lineage>
</organism>
<evidence type="ECO:0000250" key="1">
    <source>
        <dbReference type="UniProtKB" id="P00363"/>
    </source>
</evidence>
<evidence type="ECO:0000256" key="2">
    <source>
        <dbReference type="SAM" id="MobiDB-lite"/>
    </source>
</evidence>
<evidence type="ECO:0000305" key="3"/>
<feature type="chain" id="PRO_0000158666" description="Fumarate reductase flavoprotein subunit">
    <location>
        <begin position="1"/>
        <end position="598"/>
    </location>
</feature>
<feature type="region of interest" description="Disordered" evidence="2">
    <location>
        <begin position="577"/>
        <end position="598"/>
    </location>
</feature>
<feature type="active site" evidence="1">
    <location>
        <position position="233"/>
    </location>
</feature>
<feature type="active site" evidence="1">
    <location>
        <position position="249"/>
    </location>
</feature>
<feature type="binding site" evidence="1">
    <location>
        <begin position="12"/>
        <end position="16"/>
    </location>
    <ligand>
        <name>FAD</name>
        <dbReference type="ChEBI" id="CHEBI:57692"/>
    </ligand>
</feature>
<feature type="binding site" evidence="1">
    <location>
        <begin position="36"/>
        <end position="38"/>
    </location>
    <ligand>
        <name>FAD</name>
        <dbReference type="ChEBI" id="CHEBI:57692"/>
    </ligand>
</feature>
<feature type="binding site" evidence="1">
    <location>
        <begin position="44"/>
        <end position="52"/>
    </location>
    <ligand>
        <name>FAD</name>
        <dbReference type="ChEBI" id="CHEBI:57692"/>
    </ligand>
</feature>
<feature type="binding site" evidence="1">
    <location>
        <begin position="156"/>
        <end position="158"/>
    </location>
    <ligand>
        <name>FAD</name>
        <dbReference type="ChEBI" id="CHEBI:57692"/>
    </ligand>
</feature>
<feature type="binding site" evidence="1">
    <location>
        <position position="212"/>
    </location>
    <ligand>
        <name>FAD</name>
        <dbReference type="ChEBI" id="CHEBI:57692"/>
    </ligand>
</feature>
<feature type="binding site" evidence="1">
    <location>
        <begin position="356"/>
        <end position="357"/>
    </location>
    <ligand>
        <name>FAD</name>
        <dbReference type="ChEBI" id="CHEBI:57692"/>
    </ligand>
</feature>
<feature type="binding site" evidence="1">
    <location>
        <position position="380"/>
    </location>
    <ligand>
        <name>FAD</name>
        <dbReference type="ChEBI" id="CHEBI:57692"/>
    </ligand>
</feature>
<feature type="binding site" evidence="1">
    <location>
        <begin position="391"/>
        <end position="397"/>
    </location>
    <ligand>
        <name>FAD</name>
        <dbReference type="ChEBI" id="CHEBI:57692"/>
    </ligand>
</feature>
<feature type="modified residue" description="Tele-8alpha-FAD histidine" evidence="1">
    <location>
        <position position="45"/>
    </location>
</feature>
<keyword id="KW-0997">Cell inner membrane</keyword>
<keyword id="KW-1003">Cell membrane</keyword>
<keyword id="KW-0249">Electron transport</keyword>
<keyword id="KW-0274">FAD</keyword>
<keyword id="KW-0285">Flavoprotein</keyword>
<keyword id="KW-0472">Membrane</keyword>
<keyword id="KW-0547">Nucleotide-binding</keyword>
<keyword id="KW-0560">Oxidoreductase</keyword>
<keyword id="KW-0813">Transport</keyword>
<dbReference type="EC" id="1.3.5.1" evidence="1"/>
<dbReference type="EMBL" id="X06144">
    <property type="protein sequence ID" value="CAA29501.1"/>
    <property type="molecule type" value="Genomic_DNA"/>
</dbReference>
<dbReference type="PIR" id="S00107">
    <property type="entry name" value="RDEBFV"/>
</dbReference>
<dbReference type="SMR" id="P20922"/>
<dbReference type="STRING" id="585.DR95_2058"/>
<dbReference type="eggNOG" id="COG1053">
    <property type="taxonomic scope" value="Bacteria"/>
</dbReference>
<dbReference type="GO" id="GO:0005886">
    <property type="term" value="C:plasma membrane"/>
    <property type="evidence" value="ECO:0007669"/>
    <property type="project" value="UniProtKB-SubCell"/>
</dbReference>
<dbReference type="GO" id="GO:0009055">
    <property type="term" value="F:electron transfer activity"/>
    <property type="evidence" value="ECO:0007669"/>
    <property type="project" value="TreeGrafter"/>
</dbReference>
<dbReference type="GO" id="GO:0050660">
    <property type="term" value="F:flavin adenine dinucleotide binding"/>
    <property type="evidence" value="ECO:0007669"/>
    <property type="project" value="InterPro"/>
</dbReference>
<dbReference type="GO" id="GO:0008177">
    <property type="term" value="F:succinate dehydrogenase (quinone) activity"/>
    <property type="evidence" value="ECO:0007669"/>
    <property type="project" value="RHEA"/>
</dbReference>
<dbReference type="GO" id="GO:0009061">
    <property type="term" value="P:anaerobic respiration"/>
    <property type="evidence" value="ECO:0007669"/>
    <property type="project" value="InterPro"/>
</dbReference>
<dbReference type="GO" id="GO:0022900">
    <property type="term" value="P:electron transport chain"/>
    <property type="evidence" value="ECO:0007669"/>
    <property type="project" value="InterPro"/>
</dbReference>
<dbReference type="GO" id="GO:0006113">
    <property type="term" value="P:fermentation"/>
    <property type="evidence" value="ECO:0007669"/>
    <property type="project" value="TreeGrafter"/>
</dbReference>
<dbReference type="FunFam" id="3.50.50.60:FF:000017">
    <property type="entry name" value="Fumarate reductase flavoprotein subunit"/>
    <property type="match status" value="1"/>
</dbReference>
<dbReference type="FunFam" id="3.90.700.10:FF:000003">
    <property type="entry name" value="Fumarate reductase flavoprotein subunit"/>
    <property type="match status" value="1"/>
</dbReference>
<dbReference type="FunFam" id="4.10.80.40:FF:000003">
    <property type="entry name" value="Fumarate reductase flavoprotein subunit"/>
    <property type="match status" value="1"/>
</dbReference>
<dbReference type="FunFam" id="1.20.58.100:FF:000001">
    <property type="entry name" value="Succinate dehydrogenase flavoprotein subunit (SdhA)"/>
    <property type="match status" value="1"/>
</dbReference>
<dbReference type="Gene3D" id="3.50.50.60">
    <property type="entry name" value="FAD/NAD(P)-binding domain"/>
    <property type="match status" value="1"/>
</dbReference>
<dbReference type="Gene3D" id="1.20.58.100">
    <property type="entry name" value="Fumarate reductase/succinate dehydrogenase flavoprotein-like, C-terminal domain"/>
    <property type="match status" value="1"/>
</dbReference>
<dbReference type="Gene3D" id="4.10.80.40">
    <property type="entry name" value="succinate dehydrogenase protein domain"/>
    <property type="match status" value="1"/>
</dbReference>
<dbReference type="Gene3D" id="3.90.700.10">
    <property type="entry name" value="Succinate dehydrogenase/fumarate reductase flavoprotein, catalytic domain"/>
    <property type="match status" value="1"/>
</dbReference>
<dbReference type="InterPro" id="IPR003953">
    <property type="entry name" value="FAD-dep_OxRdtase_2_FAD-bd"/>
</dbReference>
<dbReference type="InterPro" id="IPR036188">
    <property type="entry name" value="FAD/NAD-bd_sf"/>
</dbReference>
<dbReference type="InterPro" id="IPR003952">
    <property type="entry name" value="FRD_SDH_FAD_BS"/>
</dbReference>
<dbReference type="InterPro" id="IPR037099">
    <property type="entry name" value="Fum_R/Succ_DH_flav-like_C_sf"/>
</dbReference>
<dbReference type="InterPro" id="IPR015939">
    <property type="entry name" value="Fum_Rdtase/Succ_DH_flav-like_C"/>
</dbReference>
<dbReference type="InterPro" id="IPR005884">
    <property type="entry name" value="Fum_red_fp"/>
</dbReference>
<dbReference type="InterPro" id="IPR030664">
    <property type="entry name" value="SdhA/FrdA/AprA"/>
</dbReference>
<dbReference type="InterPro" id="IPR027477">
    <property type="entry name" value="Succ_DH/fumarate_Rdtase_cat_sf"/>
</dbReference>
<dbReference type="InterPro" id="IPR014006">
    <property type="entry name" value="Succ_Dhase_FrdA_Gneg"/>
</dbReference>
<dbReference type="NCBIfam" id="TIGR01176">
    <property type="entry name" value="fum_red_Fp"/>
    <property type="match status" value="1"/>
</dbReference>
<dbReference type="NCBIfam" id="NF006686">
    <property type="entry name" value="PRK09231.1"/>
    <property type="match status" value="1"/>
</dbReference>
<dbReference type="NCBIfam" id="TIGR01812">
    <property type="entry name" value="sdhA_frdA_Gneg"/>
    <property type="match status" value="1"/>
</dbReference>
<dbReference type="PANTHER" id="PTHR11632:SF82">
    <property type="entry name" value="FUMARATE REDUCTASE FLAVOPROTEIN SUBUNIT"/>
    <property type="match status" value="1"/>
</dbReference>
<dbReference type="PANTHER" id="PTHR11632">
    <property type="entry name" value="SUCCINATE DEHYDROGENASE 2 FLAVOPROTEIN SUBUNIT"/>
    <property type="match status" value="1"/>
</dbReference>
<dbReference type="Pfam" id="PF00890">
    <property type="entry name" value="FAD_binding_2"/>
    <property type="match status" value="1"/>
</dbReference>
<dbReference type="Pfam" id="PF02910">
    <property type="entry name" value="Succ_DH_flav_C"/>
    <property type="match status" value="1"/>
</dbReference>
<dbReference type="PIRSF" id="PIRSF000171">
    <property type="entry name" value="SDHA_APRA_LASPO"/>
    <property type="match status" value="1"/>
</dbReference>
<dbReference type="PRINTS" id="PR00368">
    <property type="entry name" value="FADPNR"/>
</dbReference>
<dbReference type="PRINTS" id="PR00411">
    <property type="entry name" value="PNDRDTASEI"/>
</dbReference>
<dbReference type="SUPFAM" id="SSF51905">
    <property type="entry name" value="FAD/NAD(P)-binding domain"/>
    <property type="match status" value="1"/>
</dbReference>
<dbReference type="SUPFAM" id="SSF46977">
    <property type="entry name" value="Succinate dehydrogenase/fumarate reductase flavoprotein C-terminal domain"/>
    <property type="match status" value="1"/>
</dbReference>
<dbReference type="SUPFAM" id="SSF56425">
    <property type="entry name" value="Succinate dehydrogenase/fumarate reductase flavoprotein, catalytic domain"/>
    <property type="match status" value="1"/>
</dbReference>
<dbReference type="PROSITE" id="PS00504">
    <property type="entry name" value="FRD_SDH_FAD_BINDING"/>
    <property type="match status" value="1"/>
</dbReference>
<sequence length="598" mass="66142">MQTFNADIAIIGAGGAGLRAAIAAAEANPQLKIALISKVYPMRSHTVAAEGGSAAVTQAHDSYDFHFNDTVSGGDWLCEQDVVDYFVEHCPTEMTQLELWGCPWSRKEDGSVNVRRFGGMKIERTWFAADKTGFHMLHTLFQTSLKYPQIQRFDEHFVLDILVDEGHARGVVAINMMEGTKVQIRANAVIMATGGAGRVYRFNTNGGIVTGDGMGIALRHGVPLRDMEFVQYHPTGLPGSGILMTEGCRGEGGILVNKDGYRYLQDYGLGPETPLGKPENKYMELGPRDKVSQAFWHEWRAGRTIKTHRGDVVHLDLRHLGAKKLHERLPFICELAKAYVGVDPVNEPIPVRPTAHYTMGGIETNQRTETRIKGLFAVGECSSVGLHGANRLGSNSLAELVVFGRLAGEEAVRRAQEATPANASALDAQTRDIEDNLKKLMNQKGSENWAQIRDEMGEAMEEGCGIYRTPELMQKTIDKLTELKERFKHVEIKDTSSVFNTDLLYKIELGFGLDVAECMAHSAFNRKESRGAHQRLDEGCTERDDVNFLKHTLAFYNPEGAPRLEYSDVKITKSAPAKRVYGGEATAQDKQNKEKANG</sequence>
<protein>
    <recommendedName>
        <fullName>Fumarate reductase flavoprotein subunit</fullName>
        <ecNumber evidence="1">1.3.5.1</ecNumber>
    </recommendedName>
    <alternativeName>
        <fullName evidence="3">Quinol-fumarate reductase flavoprotein subunit</fullName>
        <shortName evidence="3">QFR flavoprotein subunit</shortName>
    </alternativeName>
</protein>
<gene>
    <name type="primary">frdA</name>
</gene>
<proteinExistence type="inferred from homology"/>
<comment type="function">
    <text evidence="1">Two distinct, membrane-bound, FAD-containing enzymes are responsible for the catalysis of fumarate and succinate interconversion; the fumarate reductase is used in anaerobic growth, and the succinate dehydrogenase is used in aerobic growth.</text>
</comment>
<comment type="catalytic activity">
    <reaction evidence="1">
        <text>a quinone + succinate = fumarate + a quinol</text>
        <dbReference type="Rhea" id="RHEA:40523"/>
        <dbReference type="ChEBI" id="CHEBI:24646"/>
        <dbReference type="ChEBI" id="CHEBI:29806"/>
        <dbReference type="ChEBI" id="CHEBI:30031"/>
        <dbReference type="ChEBI" id="CHEBI:132124"/>
        <dbReference type="EC" id="1.3.5.1"/>
    </reaction>
</comment>
<comment type="catalytic activity">
    <reaction evidence="1">
        <text>a menaquinone + succinate = a menaquinol + fumarate</text>
        <dbReference type="Rhea" id="RHEA:27834"/>
        <dbReference type="Rhea" id="RHEA-COMP:9537"/>
        <dbReference type="Rhea" id="RHEA-COMP:9539"/>
        <dbReference type="ChEBI" id="CHEBI:16374"/>
        <dbReference type="ChEBI" id="CHEBI:18151"/>
        <dbReference type="ChEBI" id="CHEBI:29806"/>
        <dbReference type="ChEBI" id="CHEBI:30031"/>
        <dbReference type="EC" id="1.3.5.1"/>
    </reaction>
</comment>
<comment type="cofactor">
    <cofactor evidence="1">
        <name>FAD</name>
        <dbReference type="ChEBI" id="CHEBI:57692"/>
    </cofactor>
    <text evidence="1">Binds 1 FAD covalently per subunit.</text>
</comment>
<comment type="subunit">
    <text evidence="1">Part of an enzyme complex containing four subunits: a flavoprotein (FrdA), an iron-sulfur protein (FrdB), and two hydrophobic anchor proteins (FrdC and FrdD).</text>
</comment>
<comment type="subcellular location">
    <subcellularLocation>
        <location evidence="1">Cell inner membrane</location>
        <topology evidence="1">Peripheral membrane protein</topology>
        <orientation evidence="1">Cytoplasmic side</orientation>
    </subcellularLocation>
</comment>
<comment type="similarity">
    <text evidence="3">Belongs to the FAD-dependent oxidoreductase 2 family. FRD/SDH subfamily.</text>
</comment>
<name>FRDA_PROVU</name>